<keyword id="KW-0150">Chloroplast</keyword>
<keyword id="KW-0249">Electron transport</keyword>
<keyword id="KW-0349">Heme</keyword>
<keyword id="KW-0408">Iron</keyword>
<keyword id="KW-0472">Membrane</keyword>
<keyword id="KW-0479">Metal-binding</keyword>
<keyword id="KW-0602">Photosynthesis</keyword>
<keyword id="KW-0934">Plastid</keyword>
<keyword id="KW-0793">Thylakoid</keyword>
<keyword id="KW-0812">Transmembrane</keyword>
<keyword id="KW-1133">Transmembrane helix</keyword>
<keyword id="KW-0813">Transport</keyword>
<evidence type="ECO:0000255" key="1">
    <source>
        <dbReference type="HAMAP-Rule" id="MF_00633"/>
    </source>
</evidence>
<proteinExistence type="inferred from homology"/>
<protein>
    <recommendedName>
        <fullName evidence="1">Cytochrome b6</fullName>
    </recommendedName>
</protein>
<gene>
    <name evidence="1" type="primary">petB</name>
</gene>
<reference key="1">
    <citation type="journal article" date="2007" name="Mol. Genet. Genomics">
        <title>Chloroplast genomes of the diatoms Phaeodactylum tricornutum and Thalassiosira pseudonana: comparison with other plastid genomes of the red lineage.</title>
        <authorList>
            <person name="Oudot-Le Secq M.-P."/>
            <person name="Grimwood J."/>
            <person name="Shapiro H."/>
            <person name="Armbrust E.V."/>
            <person name="Bowler C."/>
            <person name="Green B.R."/>
        </authorList>
    </citation>
    <scope>NUCLEOTIDE SEQUENCE [LARGE SCALE GENOMIC DNA]</scope>
    <source>
        <strain>CCMP1335 / NEPCC58 / CCAP 1085/12</strain>
    </source>
</reference>
<dbReference type="EMBL" id="EF067921">
    <property type="protein sequence ID" value="ABK20771.1"/>
    <property type="molecule type" value="Genomic_DNA"/>
</dbReference>
<dbReference type="RefSeq" id="YP_874548.1">
    <property type="nucleotide sequence ID" value="NC_008589.1"/>
</dbReference>
<dbReference type="SMR" id="A0T0T6"/>
<dbReference type="STRING" id="35128.A0T0T6"/>
<dbReference type="PaxDb" id="35128-Thapsdraft467"/>
<dbReference type="GeneID" id="4524843"/>
<dbReference type="eggNOG" id="KOG4663">
    <property type="taxonomic scope" value="Eukaryota"/>
</dbReference>
<dbReference type="InParanoid" id="A0T0T6"/>
<dbReference type="OMA" id="WDQLAIW"/>
<dbReference type="GO" id="GO:0009535">
    <property type="term" value="C:chloroplast thylakoid membrane"/>
    <property type="evidence" value="ECO:0007669"/>
    <property type="project" value="UniProtKB-SubCell"/>
</dbReference>
<dbReference type="GO" id="GO:0016020">
    <property type="term" value="C:membrane"/>
    <property type="evidence" value="ECO:0000318"/>
    <property type="project" value="GO_Central"/>
</dbReference>
<dbReference type="GO" id="GO:0045158">
    <property type="term" value="F:electron transporter, transferring electrons within cytochrome b6/f complex of photosystem II activity"/>
    <property type="evidence" value="ECO:0007669"/>
    <property type="project" value="UniProtKB-UniRule"/>
</dbReference>
<dbReference type="GO" id="GO:0046872">
    <property type="term" value="F:metal ion binding"/>
    <property type="evidence" value="ECO:0007669"/>
    <property type="project" value="UniProtKB-KW"/>
</dbReference>
<dbReference type="GO" id="GO:0016491">
    <property type="term" value="F:oxidoreductase activity"/>
    <property type="evidence" value="ECO:0007669"/>
    <property type="project" value="InterPro"/>
</dbReference>
<dbReference type="GO" id="GO:0015979">
    <property type="term" value="P:photosynthesis"/>
    <property type="evidence" value="ECO:0007669"/>
    <property type="project" value="UniProtKB-UniRule"/>
</dbReference>
<dbReference type="GO" id="GO:0022904">
    <property type="term" value="P:respiratory electron transport chain"/>
    <property type="evidence" value="ECO:0007669"/>
    <property type="project" value="InterPro"/>
</dbReference>
<dbReference type="CDD" id="cd00284">
    <property type="entry name" value="Cytochrome_b_N"/>
    <property type="match status" value="1"/>
</dbReference>
<dbReference type="FunFam" id="1.20.810.10:FF:000001">
    <property type="entry name" value="Cytochrome b6"/>
    <property type="match status" value="1"/>
</dbReference>
<dbReference type="Gene3D" id="1.20.810.10">
    <property type="entry name" value="Cytochrome Bc1 Complex, Chain C"/>
    <property type="match status" value="1"/>
</dbReference>
<dbReference type="HAMAP" id="MF_00633">
    <property type="entry name" value="Cytb6_f_cytb6"/>
    <property type="match status" value="1"/>
</dbReference>
<dbReference type="InterPro" id="IPR005797">
    <property type="entry name" value="Cyt_b/b6_N"/>
</dbReference>
<dbReference type="InterPro" id="IPR023530">
    <property type="entry name" value="Cyt_B6_PetB"/>
</dbReference>
<dbReference type="InterPro" id="IPR027387">
    <property type="entry name" value="Cytb/b6-like_sf"/>
</dbReference>
<dbReference type="InterPro" id="IPR048259">
    <property type="entry name" value="Cytochrome_b_N_euk/bac"/>
</dbReference>
<dbReference type="InterPro" id="IPR016174">
    <property type="entry name" value="Di-haem_cyt_TM"/>
</dbReference>
<dbReference type="NCBIfam" id="NF002990">
    <property type="entry name" value="PRK03735.1"/>
    <property type="match status" value="1"/>
</dbReference>
<dbReference type="PANTHER" id="PTHR19271">
    <property type="entry name" value="CYTOCHROME B"/>
    <property type="match status" value="1"/>
</dbReference>
<dbReference type="PANTHER" id="PTHR19271:SF16">
    <property type="entry name" value="CYTOCHROME B"/>
    <property type="match status" value="1"/>
</dbReference>
<dbReference type="Pfam" id="PF00033">
    <property type="entry name" value="Cytochrome_B"/>
    <property type="match status" value="1"/>
</dbReference>
<dbReference type="PIRSF" id="PIRSF000032">
    <property type="entry name" value="Cytochrome_b6"/>
    <property type="match status" value="1"/>
</dbReference>
<dbReference type="SUPFAM" id="SSF81342">
    <property type="entry name" value="Transmembrane di-heme cytochromes"/>
    <property type="match status" value="1"/>
</dbReference>
<dbReference type="PROSITE" id="PS51002">
    <property type="entry name" value="CYTB_NTER"/>
    <property type="match status" value="1"/>
</dbReference>
<comment type="function">
    <text evidence="1">Component of the cytochrome b6-f complex, which mediates electron transfer between photosystem II (PSII) and photosystem I (PSI), cyclic electron flow around PSI, and state transitions.</text>
</comment>
<comment type="cofactor">
    <cofactor evidence="1">
        <name>heme b</name>
        <dbReference type="ChEBI" id="CHEBI:60344"/>
    </cofactor>
    <text evidence="1">Binds 2 heme b groups non-covalently with two histidine residues as axial ligands.</text>
</comment>
<comment type="cofactor">
    <cofactor evidence="1">
        <name>heme c</name>
        <dbReference type="ChEBI" id="CHEBI:61717"/>
    </cofactor>
    <text evidence="1">Binds one heme group covalently by a single cysteine link with no axial amino acid ligand. This heme was named heme ci.</text>
</comment>
<comment type="subunit">
    <text evidence="1">The 4 large subunits of the cytochrome b6-f complex are cytochrome b6, subunit IV (17 kDa polypeptide, PetD), cytochrome f and the Rieske protein, while the 4 small subunits are PetG, PetL, PetM and PetN. The complex functions as a dimer.</text>
</comment>
<comment type="subcellular location">
    <subcellularLocation>
        <location evidence="1">Plastid</location>
        <location evidence="1">Chloroplast thylakoid membrane</location>
        <topology evidence="1">Multi-pass membrane protein</topology>
    </subcellularLocation>
</comment>
<comment type="miscellaneous">
    <text evidence="1">Heme 1 (or BH or b566) is high-potential and absorbs at about 566 nm, and heme 2 (or BL or b562) is low-potential and absorbs at about 562 nm.</text>
</comment>
<comment type="similarity">
    <text evidence="1">Belongs to the cytochrome b family. PetB subfamily.</text>
</comment>
<accession>A0T0T6</accession>
<sequence>MGKVYDWFEERLEVQAIADDISSKYVPPHVNIFYCFGGIVFTCFLVQVATGFAMTFYYRPSVVDAFASVEYIMTSVNFGWLIRSIHRWSASMMVMMLVLHVFRVYLTGGFKKPRELTWVTGVILAVVTVSFGVTGYSLPWDQVGFWACKIVTGVPAAVPIVGPPLVLVLRGGESVGQSTLTRFYSAHTFVLPLAAAVLMLTHFLMIRKQGISGPL</sequence>
<geneLocation type="chloroplast"/>
<name>CYB6_THAPS</name>
<feature type="chain" id="PRO_0000275344" description="Cytochrome b6">
    <location>
        <begin position="1"/>
        <end position="215"/>
    </location>
</feature>
<feature type="transmembrane region" description="Helical" evidence="1">
    <location>
        <begin position="32"/>
        <end position="52"/>
    </location>
</feature>
<feature type="transmembrane region" description="Helical" evidence="1">
    <location>
        <begin position="90"/>
        <end position="110"/>
    </location>
</feature>
<feature type="transmembrane region" description="Helical" evidence="1">
    <location>
        <begin position="116"/>
        <end position="136"/>
    </location>
</feature>
<feature type="transmembrane region" description="Helical" evidence="1">
    <location>
        <begin position="186"/>
        <end position="206"/>
    </location>
</feature>
<feature type="binding site" description="covalent" evidence="1">
    <location>
        <position position="35"/>
    </location>
    <ligand>
        <name>heme c</name>
        <dbReference type="ChEBI" id="CHEBI:61717"/>
    </ligand>
</feature>
<feature type="binding site" description="axial binding residue" evidence="1">
    <location>
        <position position="86"/>
    </location>
    <ligand>
        <name>heme b</name>
        <dbReference type="ChEBI" id="CHEBI:60344"/>
        <label>2</label>
    </ligand>
    <ligandPart>
        <name>Fe</name>
        <dbReference type="ChEBI" id="CHEBI:18248"/>
    </ligandPart>
</feature>
<feature type="binding site" description="axial binding residue" evidence="1">
    <location>
        <position position="100"/>
    </location>
    <ligand>
        <name>heme b</name>
        <dbReference type="ChEBI" id="CHEBI:60344"/>
        <label>1</label>
    </ligand>
    <ligandPart>
        <name>Fe</name>
        <dbReference type="ChEBI" id="CHEBI:18248"/>
    </ligandPart>
</feature>
<feature type="binding site" description="axial binding residue" evidence="1">
    <location>
        <position position="187"/>
    </location>
    <ligand>
        <name>heme b</name>
        <dbReference type="ChEBI" id="CHEBI:60344"/>
        <label>2</label>
    </ligand>
    <ligandPart>
        <name>Fe</name>
        <dbReference type="ChEBI" id="CHEBI:18248"/>
    </ligandPart>
</feature>
<feature type="binding site" description="axial binding residue" evidence="1">
    <location>
        <position position="202"/>
    </location>
    <ligand>
        <name>heme b</name>
        <dbReference type="ChEBI" id="CHEBI:60344"/>
        <label>1</label>
    </ligand>
    <ligandPart>
        <name>Fe</name>
        <dbReference type="ChEBI" id="CHEBI:18248"/>
    </ligandPart>
</feature>
<organism>
    <name type="scientific">Thalassiosira pseudonana</name>
    <name type="common">Marine diatom</name>
    <name type="synonym">Cyclotella nana</name>
    <dbReference type="NCBI Taxonomy" id="35128"/>
    <lineage>
        <taxon>Eukaryota</taxon>
        <taxon>Sar</taxon>
        <taxon>Stramenopiles</taxon>
        <taxon>Ochrophyta</taxon>
        <taxon>Bacillariophyta</taxon>
        <taxon>Coscinodiscophyceae</taxon>
        <taxon>Thalassiosirophycidae</taxon>
        <taxon>Thalassiosirales</taxon>
        <taxon>Thalassiosiraceae</taxon>
        <taxon>Thalassiosira</taxon>
    </lineage>
</organism>